<organism>
    <name type="scientific">Staphylococcus epidermidis (strain ATCC 12228 / FDA PCI 1200)</name>
    <dbReference type="NCBI Taxonomy" id="176280"/>
    <lineage>
        <taxon>Bacteria</taxon>
        <taxon>Bacillati</taxon>
        <taxon>Bacillota</taxon>
        <taxon>Bacilli</taxon>
        <taxon>Bacillales</taxon>
        <taxon>Staphylococcaceae</taxon>
        <taxon>Staphylococcus</taxon>
    </lineage>
</organism>
<sequence>MNNFRWFWFFIKSRINWILWILFLNIILLGVAYIDYEISVESVFYIVILNVGLSILFLLFTFVKEVRLSKHFYEDKEIEEIKHKDLAETPFQQQVIDYLYRHIAAQKEKVVEQQLQIKNHEQTITEFVHDIKTPVTAMKLLIDQENDDQRKRALLFEWSRINEMLDKQLYLTRLETHHRDMYFDYISLKRMVIDEIQVTRHISQAKGIGFELDFKDEQKVYTDVKWCRMMIRQVLSNSLKYSDNSTINLSGYNIEGHVVLKIKDYGRGISKRDLPRIFDRGFTSTTDRNDTASSGMGLYLVQSVKEQLGIEVKVDSIVGKGTTFYFIFPQQNEIIERMSKVTRLSF</sequence>
<accession>Q8CTL4</accession>
<keyword id="KW-0046">Antibiotic resistance</keyword>
<keyword id="KW-0067">ATP-binding</keyword>
<keyword id="KW-1003">Cell membrane</keyword>
<keyword id="KW-0418">Kinase</keyword>
<keyword id="KW-0472">Membrane</keyword>
<keyword id="KW-0547">Nucleotide-binding</keyword>
<keyword id="KW-0597">Phosphoprotein</keyword>
<keyword id="KW-0808">Transferase</keyword>
<keyword id="KW-0812">Transmembrane</keyword>
<keyword id="KW-1133">Transmembrane helix</keyword>
<keyword id="KW-0902">Two-component regulatory system</keyword>
<keyword id="KW-0843">Virulence</keyword>
<feature type="chain" id="PRO_0000347927" description="Sensor histidine kinase GraS">
    <location>
        <begin position="1"/>
        <end position="346"/>
    </location>
</feature>
<feature type="transmembrane region" description="Helical" evidence="2">
    <location>
        <begin position="15"/>
        <end position="35"/>
    </location>
</feature>
<feature type="transmembrane region" description="Helical" evidence="2">
    <location>
        <begin position="43"/>
        <end position="63"/>
    </location>
</feature>
<feature type="domain" description="Histidine kinase" evidence="3">
    <location>
        <begin position="126"/>
        <end position="332"/>
    </location>
</feature>
<feature type="modified residue" description="Phosphohistidine; by autocatalysis" evidence="3">
    <location>
        <position position="129"/>
    </location>
</feature>
<protein>
    <recommendedName>
        <fullName>Sensor histidine kinase GraS</fullName>
        <ecNumber>2.7.13.3</ecNumber>
    </recommendedName>
    <alternativeName>
        <fullName>Glycopeptide resistance-associated protein S</fullName>
    </alternativeName>
</protein>
<comment type="function">
    <text evidence="1">Member of the two-component regulatory system GraR/GraS involved in resistance against cationic antimicrobial peptides (CAMPs). GraS probably functions as a sensor protein kinase which is autophosphorylated at a histidine residue and transfers its phosphate group to GraR (By similarity).</text>
</comment>
<comment type="catalytic activity">
    <reaction>
        <text>ATP + protein L-histidine = ADP + protein N-phospho-L-histidine.</text>
        <dbReference type="EC" id="2.7.13.3"/>
    </reaction>
</comment>
<comment type="subcellular location">
    <subcellularLocation>
        <location evidence="4">Cell membrane</location>
        <topology evidence="4">Multi-pass membrane protein</topology>
    </subcellularLocation>
</comment>
<comment type="PTM">
    <text evidence="1">Autophosphorylated.</text>
</comment>
<name>GRAS_STAES</name>
<gene>
    <name type="primary">graS</name>
    <name type="ordered locus">SE_0428</name>
</gene>
<proteinExistence type="inferred from homology"/>
<evidence type="ECO:0000250" key="1"/>
<evidence type="ECO:0000255" key="2"/>
<evidence type="ECO:0000255" key="3">
    <source>
        <dbReference type="PROSITE-ProRule" id="PRU00107"/>
    </source>
</evidence>
<evidence type="ECO:0000305" key="4"/>
<reference key="1">
    <citation type="journal article" date="2003" name="Mol. Microbiol.">
        <title>Genome-based analysis of virulence genes in a non-biofilm-forming Staphylococcus epidermidis strain (ATCC 12228).</title>
        <authorList>
            <person name="Zhang Y.-Q."/>
            <person name="Ren S.-X."/>
            <person name="Li H.-L."/>
            <person name="Wang Y.-X."/>
            <person name="Fu G."/>
            <person name="Yang J."/>
            <person name="Qin Z.-Q."/>
            <person name="Miao Y.-G."/>
            <person name="Wang W.-Y."/>
            <person name="Chen R.-S."/>
            <person name="Shen Y."/>
            <person name="Chen Z."/>
            <person name="Yuan Z.-H."/>
            <person name="Zhao G.-P."/>
            <person name="Qu D."/>
            <person name="Danchin A."/>
            <person name="Wen Y.-M."/>
        </authorList>
    </citation>
    <scope>NUCLEOTIDE SEQUENCE [LARGE SCALE GENOMIC DNA]</scope>
    <source>
        <strain>ATCC 12228 / FDA PCI 1200</strain>
    </source>
</reference>
<dbReference type="EC" id="2.7.13.3"/>
<dbReference type="EMBL" id="AE015929">
    <property type="protein sequence ID" value="AAO04025.1"/>
    <property type="molecule type" value="Genomic_DNA"/>
</dbReference>
<dbReference type="RefSeq" id="NP_763983.1">
    <property type="nucleotide sequence ID" value="NC_004461.1"/>
</dbReference>
<dbReference type="RefSeq" id="WP_002438833.1">
    <property type="nucleotide sequence ID" value="NZ_WBME01000020.1"/>
</dbReference>
<dbReference type="SMR" id="Q8CTL4"/>
<dbReference type="GeneID" id="50019416"/>
<dbReference type="KEGG" id="sep:SE_0428"/>
<dbReference type="PATRIC" id="fig|176280.10.peg.402"/>
<dbReference type="eggNOG" id="COG2205">
    <property type="taxonomic scope" value="Bacteria"/>
</dbReference>
<dbReference type="HOGENOM" id="CLU_000445_13_1_9"/>
<dbReference type="OrthoDB" id="9780487at2"/>
<dbReference type="Proteomes" id="UP000001411">
    <property type="component" value="Chromosome"/>
</dbReference>
<dbReference type="GO" id="GO:0005886">
    <property type="term" value="C:plasma membrane"/>
    <property type="evidence" value="ECO:0007669"/>
    <property type="project" value="UniProtKB-SubCell"/>
</dbReference>
<dbReference type="GO" id="GO:0005524">
    <property type="term" value="F:ATP binding"/>
    <property type="evidence" value="ECO:0007669"/>
    <property type="project" value="UniProtKB-KW"/>
</dbReference>
<dbReference type="GO" id="GO:0004721">
    <property type="term" value="F:phosphoprotein phosphatase activity"/>
    <property type="evidence" value="ECO:0007669"/>
    <property type="project" value="TreeGrafter"/>
</dbReference>
<dbReference type="GO" id="GO:0000155">
    <property type="term" value="F:phosphorelay sensor kinase activity"/>
    <property type="evidence" value="ECO:0007669"/>
    <property type="project" value="TreeGrafter"/>
</dbReference>
<dbReference type="GO" id="GO:0016036">
    <property type="term" value="P:cellular response to phosphate starvation"/>
    <property type="evidence" value="ECO:0007669"/>
    <property type="project" value="TreeGrafter"/>
</dbReference>
<dbReference type="GO" id="GO:0046677">
    <property type="term" value="P:response to antibiotic"/>
    <property type="evidence" value="ECO:0007669"/>
    <property type="project" value="UniProtKB-KW"/>
</dbReference>
<dbReference type="Gene3D" id="3.30.565.10">
    <property type="entry name" value="Histidine kinase-like ATPase, C-terminal domain"/>
    <property type="match status" value="1"/>
</dbReference>
<dbReference type="InterPro" id="IPR050351">
    <property type="entry name" value="2-comp_sensor_kinase"/>
</dbReference>
<dbReference type="InterPro" id="IPR036890">
    <property type="entry name" value="HATPase_C_sf"/>
</dbReference>
<dbReference type="InterPro" id="IPR005467">
    <property type="entry name" value="His_kinase_dom"/>
</dbReference>
<dbReference type="InterPro" id="IPR004358">
    <property type="entry name" value="Sig_transdc_His_kin-like_C"/>
</dbReference>
<dbReference type="PANTHER" id="PTHR45453:SF2">
    <property type="entry name" value="HISTIDINE KINASE"/>
    <property type="match status" value="1"/>
</dbReference>
<dbReference type="PANTHER" id="PTHR45453">
    <property type="entry name" value="PHOSPHATE REGULON SENSOR PROTEIN PHOR"/>
    <property type="match status" value="1"/>
</dbReference>
<dbReference type="Pfam" id="PF02518">
    <property type="entry name" value="HATPase_c"/>
    <property type="match status" value="1"/>
</dbReference>
<dbReference type="PRINTS" id="PR00344">
    <property type="entry name" value="BCTRLSENSOR"/>
</dbReference>
<dbReference type="SMART" id="SM00387">
    <property type="entry name" value="HATPase_c"/>
    <property type="match status" value="1"/>
</dbReference>
<dbReference type="SUPFAM" id="SSF55874">
    <property type="entry name" value="ATPase domain of HSP90 chaperone/DNA topoisomerase II/histidine kinase"/>
    <property type="match status" value="1"/>
</dbReference>
<dbReference type="PROSITE" id="PS50109">
    <property type="entry name" value="HIS_KIN"/>
    <property type="match status" value="1"/>
</dbReference>